<gene>
    <name type="ordered locus">BARBAKC583_0163</name>
</gene>
<proteinExistence type="inferred from homology"/>
<organism>
    <name type="scientific">Bartonella bacilliformis (strain ATCC 35685 / KC583 / Herrer 020/F12,63)</name>
    <dbReference type="NCBI Taxonomy" id="360095"/>
    <lineage>
        <taxon>Bacteria</taxon>
        <taxon>Pseudomonadati</taxon>
        <taxon>Pseudomonadota</taxon>
        <taxon>Alphaproteobacteria</taxon>
        <taxon>Hyphomicrobiales</taxon>
        <taxon>Bartonellaceae</taxon>
        <taxon>Bartonella</taxon>
    </lineage>
</organism>
<name>Y163_BARBK</name>
<sequence>MAGHSQFKNIMHRKGRQDAVRSKVFSKLAREITVAAKQGSPDPAMNPRLRLAVQNAKSQSMPKDNIERAIKKASGGDVENYDEVRYEGYGPGGVAIIVEALTDNRNRTASNVRAAFTKAGGALGETGSVGFMFNRIGEIIYKPEAGTAESVMEAAIEAGAEDVQSEETGHHITCAFEDIGEVSKMLEATLGEAESIKTIWKPTTLAPVDEEKAMSILRLISTLEEDDDVQNVYANFDVSDEVLAALSA</sequence>
<keyword id="KW-0963">Cytoplasm</keyword>
<keyword id="KW-0238">DNA-binding</keyword>
<keyword id="KW-0804">Transcription</keyword>
<keyword id="KW-0805">Transcription regulation</keyword>
<comment type="subcellular location">
    <subcellularLocation>
        <location evidence="1">Cytoplasm</location>
    </subcellularLocation>
</comment>
<comment type="similarity">
    <text evidence="1">Belongs to the TACO1 family.</text>
</comment>
<accession>A1UR98</accession>
<feature type="chain" id="PRO_1000045275" description="Probable transcriptional regulatory protein BARBAKC583_0163">
    <location>
        <begin position="1"/>
        <end position="248"/>
    </location>
</feature>
<reference key="1">
    <citation type="submission" date="2006-12" db="EMBL/GenBank/DDBJ databases">
        <authorList>
            <person name="Hendrix L."/>
            <person name="Mohamoud Y."/>
            <person name="Radune D."/>
            <person name="Shvartsbeyn A."/>
            <person name="Daugherty S."/>
            <person name="Dodson R."/>
            <person name="Durkin A.S."/>
            <person name="Harkins D."/>
            <person name="Huot H."/>
            <person name="Kothari S.P."/>
            <person name="Madupu R."/>
            <person name="Li J."/>
            <person name="Nelson W.C."/>
            <person name="Shrivastava S."/>
            <person name="Giglio M.G."/>
            <person name="Haft D."/>
            <person name="Selengut J."/>
            <person name="Fraser-Ligget C."/>
            <person name="Seshadri R."/>
        </authorList>
    </citation>
    <scope>NUCLEOTIDE SEQUENCE [LARGE SCALE GENOMIC DNA]</scope>
    <source>
        <strain>ATCC 35685 / KC583 / Herrer 020/F12,63</strain>
    </source>
</reference>
<protein>
    <recommendedName>
        <fullName evidence="1">Probable transcriptional regulatory protein BARBAKC583_0163</fullName>
    </recommendedName>
</protein>
<evidence type="ECO:0000255" key="1">
    <source>
        <dbReference type="HAMAP-Rule" id="MF_00693"/>
    </source>
</evidence>
<dbReference type="EMBL" id="CP000524">
    <property type="protein sequence ID" value="ABM45620.1"/>
    <property type="molecule type" value="Genomic_DNA"/>
</dbReference>
<dbReference type="RefSeq" id="WP_005765964.1">
    <property type="nucleotide sequence ID" value="NC_008783.1"/>
</dbReference>
<dbReference type="SMR" id="A1UR98"/>
<dbReference type="STRING" id="360095.BARBAKC583_0163"/>
<dbReference type="GeneID" id="4684845"/>
<dbReference type="KEGG" id="bbk:BARBAKC583_0163"/>
<dbReference type="PATRIC" id="fig|360095.6.peg.162"/>
<dbReference type="eggNOG" id="COG0217">
    <property type="taxonomic scope" value="Bacteria"/>
</dbReference>
<dbReference type="HOGENOM" id="CLU_062974_2_2_5"/>
<dbReference type="OrthoDB" id="9781053at2"/>
<dbReference type="Proteomes" id="UP000000643">
    <property type="component" value="Chromosome"/>
</dbReference>
<dbReference type="GO" id="GO:0005829">
    <property type="term" value="C:cytosol"/>
    <property type="evidence" value="ECO:0007669"/>
    <property type="project" value="TreeGrafter"/>
</dbReference>
<dbReference type="GO" id="GO:0003677">
    <property type="term" value="F:DNA binding"/>
    <property type="evidence" value="ECO:0007669"/>
    <property type="project" value="UniProtKB-UniRule"/>
</dbReference>
<dbReference type="GO" id="GO:0006355">
    <property type="term" value="P:regulation of DNA-templated transcription"/>
    <property type="evidence" value="ECO:0007669"/>
    <property type="project" value="UniProtKB-UniRule"/>
</dbReference>
<dbReference type="FunFam" id="1.10.10.200:FF:000002">
    <property type="entry name" value="Probable transcriptional regulatory protein CLM62_37755"/>
    <property type="match status" value="1"/>
</dbReference>
<dbReference type="Gene3D" id="1.10.10.200">
    <property type="match status" value="1"/>
</dbReference>
<dbReference type="Gene3D" id="3.30.70.980">
    <property type="match status" value="2"/>
</dbReference>
<dbReference type="HAMAP" id="MF_00693">
    <property type="entry name" value="Transcrip_reg_TACO1"/>
    <property type="match status" value="1"/>
</dbReference>
<dbReference type="InterPro" id="IPR017856">
    <property type="entry name" value="Integrase-like_N"/>
</dbReference>
<dbReference type="InterPro" id="IPR048300">
    <property type="entry name" value="TACO1_YebC-like_2nd/3rd_dom"/>
</dbReference>
<dbReference type="InterPro" id="IPR049083">
    <property type="entry name" value="TACO1_YebC_N"/>
</dbReference>
<dbReference type="InterPro" id="IPR002876">
    <property type="entry name" value="Transcrip_reg_TACO1-like"/>
</dbReference>
<dbReference type="InterPro" id="IPR026564">
    <property type="entry name" value="Transcrip_reg_TACO1-like_dom3"/>
</dbReference>
<dbReference type="InterPro" id="IPR029072">
    <property type="entry name" value="YebC-like"/>
</dbReference>
<dbReference type="NCBIfam" id="NF001030">
    <property type="entry name" value="PRK00110.1"/>
    <property type="match status" value="1"/>
</dbReference>
<dbReference type="NCBIfam" id="NF009044">
    <property type="entry name" value="PRK12378.1"/>
    <property type="match status" value="1"/>
</dbReference>
<dbReference type="NCBIfam" id="TIGR01033">
    <property type="entry name" value="YebC/PmpR family DNA-binding transcriptional regulator"/>
    <property type="match status" value="1"/>
</dbReference>
<dbReference type="PANTHER" id="PTHR12532:SF6">
    <property type="entry name" value="TRANSCRIPTIONAL REGULATORY PROTEIN YEBC-RELATED"/>
    <property type="match status" value="1"/>
</dbReference>
<dbReference type="PANTHER" id="PTHR12532">
    <property type="entry name" value="TRANSLATIONAL ACTIVATOR OF CYTOCHROME C OXIDASE 1"/>
    <property type="match status" value="1"/>
</dbReference>
<dbReference type="Pfam" id="PF20772">
    <property type="entry name" value="TACO1_YebC_N"/>
    <property type="match status" value="1"/>
</dbReference>
<dbReference type="Pfam" id="PF01709">
    <property type="entry name" value="Transcrip_reg"/>
    <property type="match status" value="1"/>
</dbReference>
<dbReference type="SUPFAM" id="SSF75625">
    <property type="entry name" value="YebC-like"/>
    <property type="match status" value="1"/>
</dbReference>